<organism>
    <name type="scientific">Bacillus subtilis (strain 168)</name>
    <dbReference type="NCBI Taxonomy" id="224308"/>
    <lineage>
        <taxon>Bacteria</taxon>
        <taxon>Bacillati</taxon>
        <taxon>Bacillota</taxon>
        <taxon>Bacilli</taxon>
        <taxon>Bacillales</taxon>
        <taxon>Bacillaceae</taxon>
        <taxon>Bacillus</taxon>
    </lineage>
</organism>
<sequence>MNAALIIIFGVLLLSIFLGIRAQKGKDMNLEQWTVGGRGFGTVFVFLLMAGEIYTTFTFLGGSGWAYGKGGPAFYIIAYGCLAYILSYWLLPAVWTYAKQHKLMSQSDFFTKKYNSPLLGILVSLVGIAALIPYLVLQLKGLGLIVSETSYGKITPTAAIWIGAVSITVYVMVSGIHGSAWISVVKDIMILVVVLFLGVYLPIHYYGGFQDMFQQIETAKPGFLTLPESGQSVAWFSSTVLLTALGFYMWPHTFSASYSAENPKVFRKNAIIMPLYQLVLLFVLFVGFAAILQVPDLNGADGDLSLLRLSLQAFDPWFVGIIGAAGLLTALVPGSMILMSASTLFAKNVYKVIAPRTTEQQVSALAKFLVPVIALISVYFTFKGGNTIVTLLLMGYSLVTQLFPALLFSLLKHNMVTKQGAFAGIIAGVGAVTYITMTETTIGTLFPALPQAAKDLNVGIVALLLNITVMMAVSLMTRKAKSAAADQAA</sequence>
<feature type="chain" id="PRO_0000377717" description="Uncharacterized symporter YhjB">
    <location>
        <begin position="1"/>
        <end position="489"/>
    </location>
</feature>
<feature type="transmembrane region" description="Helical" evidence="1">
    <location>
        <begin position="1"/>
        <end position="21"/>
    </location>
</feature>
<feature type="transmembrane region" description="Helical" evidence="1">
    <location>
        <begin position="40"/>
        <end position="60"/>
    </location>
</feature>
<feature type="transmembrane region" description="Helical" evidence="1">
    <location>
        <begin position="74"/>
        <end position="94"/>
    </location>
</feature>
<feature type="transmembrane region" description="Helical" evidence="1">
    <location>
        <begin position="117"/>
        <end position="137"/>
    </location>
</feature>
<feature type="transmembrane region" description="Helical" evidence="1">
    <location>
        <begin position="158"/>
        <end position="178"/>
    </location>
</feature>
<feature type="transmembrane region" description="Helical" evidence="1">
    <location>
        <begin position="188"/>
        <end position="208"/>
    </location>
</feature>
<feature type="transmembrane region" description="Helical" evidence="1">
    <location>
        <begin position="234"/>
        <end position="254"/>
    </location>
</feature>
<feature type="transmembrane region" description="Helical" evidence="1">
    <location>
        <begin position="271"/>
        <end position="291"/>
    </location>
</feature>
<feature type="transmembrane region" description="Helical" evidence="1">
    <location>
        <begin position="318"/>
        <end position="338"/>
    </location>
</feature>
<feature type="transmembrane region" description="Helical" evidence="1">
    <location>
        <begin position="362"/>
        <end position="382"/>
    </location>
</feature>
<feature type="transmembrane region" description="Helical" evidence="1">
    <location>
        <begin position="388"/>
        <end position="408"/>
    </location>
</feature>
<feature type="transmembrane region" description="Helical" evidence="1">
    <location>
        <begin position="422"/>
        <end position="442"/>
    </location>
</feature>
<feature type="transmembrane region" description="Helical" evidence="1">
    <location>
        <begin position="456"/>
        <end position="476"/>
    </location>
</feature>
<gene>
    <name type="primary">yhjB</name>
    <name type="ordered locus">BSU10450</name>
</gene>
<name>YHJB_BACSU</name>
<accession>O07556</accession>
<accession>Q796T0</accession>
<comment type="subcellular location">
    <subcellularLocation>
        <location evidence="2">Cell membrane</location>
        <topology evidence="2">Multi-pass membrane protein</topology>
    </subcellularLocation>
</comment>
<comment type="similarity">
    <text evidence="2">Belongs to the sodium:solute symporter (SSF) (TC 2.A.21) family.</text>
</comment>
<evidence type="ECO:0000255" key="1"/>
<evidence type="ECO:0000305" key="2"/>
<proteinExistence type="inferred from homology"/>
<keyword id="KW-1003">Cell membrane</keyword>
<keyword id="KW-0472">Membrane</keyword>
<keyword id="KW-1185">Reference proteome</keyword>
<keyword id="KW-0769">Symport</keyword>
<keyword id="KW-0812">Transmembrane</keyword>
<keyword id="KW-1133">Transmembrane helix</keyword>
<keyword id="KW-0813">Transport</keyword>
<reference key="1">
    <citation type="journal article" date="1998" name="Microbiology">
        <title>The 172 kb prkA-addAB region from 83 degrees to 97 degrees of the Bacillus subtilis chromosome contains several dysfunctional genes, the glyB marker, many genes encoding transporter proteins, and the ubiquitous hit gene.</title>
        <authorList>
            <person name="Noback M.A."/>
            <person name="Holsappel S."/>
            <person name="Kiewiet R."/>
            <person name="Terpstra P."/>
            <person name="Wambutt R."/>
            <person name="Wedler H."/>
            <person name="Venema G."/>
            <person name="Bron S."/>
        </authorList>
    </citation>
    <scope>NUCLEOTIDE SEQUENCE [GENOMIC DNA]</scope>
    <source>
        <strain>168</strain>
    </source>
</reference>
<reference key="2">
    <citation type="journal article" date="1997" name="Nature">
        <title>The complete genome sequence of the Gram-positive bacterium Bacillus subtilis.</title>
        <authorList>
            <person name="Kunst F."/>
            <person name="Ogasawara N."/>
            <person name="Moszer I."/>
            <person name="Albertini A.M."/>
            <person name="Alloni G."/>
            <person name="Azevedo V."/>
            <person name="Bertero M.G."/>
            <person name="Bessieres P."/>
            <person name="Bolotin A."/>
            <person name="Borchert S."/>
            <person name="Borriss R."/>
            <person name="Boursier L."/>
            <person name="Brans A."/>
            <person name="Braun M."/>
            <person name="Brignell S.C."/>
            <person name="Bron S."/>
            <person name="Brouillet S."/>
            <person name="Bruschi C.V."/>
            <person name="Caldwell B."/>
            <person name="Capuano V."/>
            <person name="Carter N.M."/>
            <person name="Choi S.-K."/>
            <person name="Codani J.-J."/>
            <person name="Connerton I.F."/>
            <person name="Cummings N.J."/>
            <person name="Daniel R.A."/>
            <person name="Denizot F."/>
            <person name="Devine K.M."/>
            <person name="Duesterhoeft A."/>
            <person name="Ehrlich S.D."/>
            <person name="Emmerson P.T."/>
            <person name="Entian K.-D."/>
            <person name="Errington J."/>
            <person name="Fabret C."/>
            <person name="Ferrari E."/>
            <person name="Foulger D."/>
            <person name="Fritz C."/>
            <person name="Fujita M."/>
            <person name="Fujita Y."/>
            <person name="Fuma S."/>
            <person name="Galizzi A."/>
            <person name="Galleron N."/>
            <person name="Ghim S.-Y."/>
            <person name="Glaser P."/>
            <person name="Goffeau A."/>
            <person name="Golightly E.J."/>
            <person name="Grandi G."/>
            <person name="Guiseppi G."/>
            <person name="Guy B.J."/>
            <person name="Haga K."/>
            <person name="Haiech J."/>
            <person name="Harwood C.R."/>
            <person name="Henaut A."/>
            <person name="Hilbert H."/>
            <person name="Holsappel S."/>
            <person name="Hosono S."/>
            <person name="Hullo M.-F."/>
            <person name="Itaya M."/>
            <person name="Jones L.-M."/>
            <person name="Joris B."/>
            <person name="Karamata D."/>
            <person name="Kasahara Y."/>
            <person name="Klaerr-Blanchard M."/>
            <person name="Klein C."/>
            <person name="Kobayashi Y."/>
            <person name="Koetter P."/>
            <person name="Koningstein G."/>
            <person name="Krogh S."/>
            <person name="Kumano M."/>
            <person name="Kurita K."/>
            <person name="Lapidus A."/>
            <person name="Lardinois S."/>
            <person name="Lauber J."/>
            <person name="Lazarevic V."/>
            <person name="Lee S.-M."/>
            <person name="Levine A."/>
            <person name="Liu H."/>
            <person name="Masuda S."/>
            <person name="Mauel C."/>
            <person name="Medigue C."/>
            <person name="Medina N."/>
            <person name="Mellado R.P."/>
            <person name="Mizuno M."/>
            <person name="Moestl D."/>
            <person name="Nakai S."/>
            <person name="Noback M."/>
            <person name="Noone D."/>
            <person name="O'Reilly M."/>
            <person name="Ogawa K."/>
            <person name="Ogiwara A."/>
            <person name="Oudega B."/>
            <person name="Park S.-H."/>
            <person name="Parro V."/>
            <person name="Pohl T.M."/>
            <person name="Portetelle D."/>
            <person name="Porwollik S."/>
            <person name="Prescott A.M."/>
            <person name="Presecan E."/>
            <person name="Pujic P."/>
            <person name="Purnelle B."/>
            <person name="Rapoport G."/>
            <person name="Rey M."/>
            <person name="Reynolds S."/>
            <person name="Rieger M."/>
            <person name="Rivolta C."/>
            <person name="Rocha E."/>
            <person name="Roche B."/>
            <person name="Rose M."/>
            <person name="Sadaie Y."/>
            <person name="Sato T."/>
            <person name="Scanlan E."/>
            <person name="Schleich S."/>
            <person name="Schroeter R."/>
            <person name="Scoffone F."/>
            <person name="Sekiguchi J."/>
            <person name="Sekowska A."/>
            <person name="Seror S.J."/>
            <person name="Serror P."/>
            <person name="Shin B.-S."/>
            <person name="Soldo B."/>
            <person name="Sorokin A."/>
            <person name="Tacconi E."/>
            <person name="Takagi T."/>
            <person name="Takahashi H."/>
            <person name="Takemaru K."/>
            <person name="Takeuchi M."/>
            <person name="Tamakoshi A."/>
            <person name="Tanaka T."/>
            <person name="Terpstra P."/>
            <person name="Tognoni A."/>
            <person name="Tosato V."/>
            <person name="Uchiyama S."/>
            <person name="Vandenbol M."/>
            <person name="Vannier F."/>
            <person name="Vassarotti A."/>
            <person name="Viari A."/>
            <person name="Wambutt R."/>
            <person name="Wedler E."/>
            <person name="Wedler H."/>
            <person name="Weitzenegger T."/>
            <person name="Winters P."/>
            <person name="Wipat A."/>
            <person name="Yamamoto H."/>
            <person name="Yamane K."/>
            <person name="Yasumoto K."/>
            <person name="Yata K."/>
            <person name="Yoshida K."/>
            <person name="Yoshikawa H.-F."/>
            <person name="Zumstein E."/>
            <person name="Yoshikawa H."/>
            <person name="Danchin A."/>
        </authorList>
    </citation>
    <scope>NUCLEOTIDE SEQUENCE [LARGE SCALE GENOMIC DNA]</scope>
    <source>
        <strain>168</strain>
    </source>
</reference>
<dbReference type="EMBL" id="Y14081">
    <property type="protein sequence ID" value="CAA74464.1"/>
    <property type="molecule type" value="Genomic_DNA"/>
</dbReference>
<dbReference type="EMBL" id="AL009126">
    <property type="protein sequence ID" value="CAB12885.1"/>
    <property type="molecule type" value="Genomic_DNA"/>
</dbReference>
<dbReference type="PIR" id="B69833">
    <property type="entry name" value="B69833"/>
</dbReference>
<dbReference type="RefSeq" id="NP_388926.1">
    <property type="nucleotide sequence ID" value="NC_000964.3"/>
</dbReference>
<dbReference type="RefSeq" id="WP_003233134.1">
    <property type="nucleotide sequence ID" value="NZ_OZ025638.1"/>
</dbReference>
<dbReference type="SMR" id="O07556"/>
<dbReference type="FunCoup" id="O07556">
    <property type="interactions" value="14"/>
</dbReference>
<dbReference type="STRING" id="224308.BSU10450"/>
<dbReference type="PaxDb" id="224308-BSU10450"/>
<dbReference type="EnsemblBacteria" id="CAB12885">
    <property type="protein sequence ID" value="CAB12885"/>
    <property type="gene ID" value="BSU_10450"/>
</dbReference>
<dbReference type="GeneID" id="939317"/>
<dbReference type="KEGG" id="bsu:BSU10450"/>
<dbReference type="PATRIC" id="fig|224308.179.peg.1124"/>
<dbReference type="eggNOG" id="COG0591">
    <property type="taxonomic scope" value="Bacteria"/>
</dbReference>
<dbReference type="InParanoid" id="O07556"/>
<dbReference type="OrthoDB" id="9810181at2"/>
<dbReference type="PhylomeDB" id="O07556"/>
<dbReference type="BioCyc" id="BSUB:BSU10450-MONOMER"/>
<dbReference type="Proteomes" id="UP000001570">
    <property type="component" value="Chromosome"/>
</dbReference>
<dbReference type="GO" id="GO:0005886">
    <property type="term" value="C:plasma membrane"/>
    <property type="evidence" value="ECO:0000318"/>
    <property type="project" value="GO_Central"/>
</dbReference>
<dbReference type="GO" id="GO:0015293">
    <property type="term" value="F:symporter activity"/>
    <property type="evidence" value="ECO:0007669"/>
    <property type="project" value="UniProtKB-KW"/>
</dbReference>
<dbReference type="GO" id="GO:0022857">
    <property type="term" value="F:transmembrane transporter activity"/>
    <property type="evidence" value="ECO:0000318"/>
    <property type="project" value="GO_Central"/>
</dbReference>
<dbReference type="GO" id="GO:0055085">
    <property type="term" value="P:transmembrane transport"/>
    <property type="evidence" value="ECO:0000318"/>
    <property type="project" value="GO_Central"/>
</dbReference>
<dbReference type="CDD" id="cd10322">
    <property type="entry name" value="SLC5sbd"/>
    <property type="match status" value="1"/>
</dbReference>
<dbReference type="Gene3D" id="1.20.1730.10">
    <property type="entry name" value="Sodium/glucose cotransporter"/>
    <property type="match status" value="1"/>
</dbReference>
<dbReference type="InterPro" id="IPR038377">
    <property type="entry name" value="Na/Glc_symporter_sf"/>
</dbReference>
<dbReference type="InterPro" id="IPR001734">
    <property type="entry name" value="Na/solute_symporter"/>
</dbReference>
<dbReference type="InterPro" id="IPR050277">
    <property type="entry name" value="Sodium:Solute_Symporter"/>
</dbReference>
<dbReference type="PANTHER" id="PTHR48086:SF8">
    <property type="entry name" value="MONOCARBOXYLIC ACID PERMEASE"/>
    <property type="match status" value="1"/>
</dbReference>
<dbReference type="PANTHER" id="PTHR48086">
    <property type="entry name" value="SODIUM/PROLINE SYMPORTER-RELATED"/>
    <property type="match status" value="1"/>
</dbReference>
<dbReference type="Pfam" id="PF00474">
    <property type="entry name" value="SSF"/>
    <property type="match status" value="1"/>
</dbReference>
<dbReference type="PROSITE" id="PS50283">
    <property type="entry name" value="NA_SOLUT_SYMP_3"/>
    <property type="match status" value="1"/>
</dbReference>
<protein>
    <recommendedName>
        <fullName>Uncharacterized symporter YhjB</fullName>
    </recommendedName>
</protein>